<accession>Q6Z2Z4</accession>
<accession>B7EMF9</accession>
<accession>Q9AR32</accession>
<gene>
    <name type="ordered locus">Os02g0146600</name>
    <name type="ordered locus">LOC_Os02g05330</name>
    <name type="ORF">OJ1008_C03.10</name>
    <name evidence="6" type="ORF">OsJ_05367</name>
</gene>
<proteinExistence type="evidence at protein level"/>
<name>IF4A3_ORYSJ</name>
<comment type="function">
    <text evidence="1">ATP-dependent RNA helicase which is a subunit of the eIF4F complex involved in cap recognition and is required for mRNA binding to ribosome. In the current model of translation initiation, eIF4A unwinds RNA secondary structures in the 5'-UTR of mRNAs which is necessary to allow efficient binding of the small ribosomal subunit, and subsequent scanning for the initiator codon (By similarity).</text>
</comment>
<comment type="catalytic activity">
    <reaction>
        <text>ATP + H2O = ADP + phosphate + H(+)</text>
        <dbReference type="Rhea" id="RHEA:13065"/>
        <dbReference type="ChEBI" id="CHEBI:15377"/>
        <dbReference type="ChEBI" id="CHEBI:15378"/>
        <dbReference type="ChEBI" id="CHEBI:30616"/>
        <dbReference type="ChEBI" id="CHEBI:43474"/>
        <dbReference type="ChEBI" id="CHEBI:456216"/>
        <dbReference type="EC" id="3.6.4.13"/>
    </reaction>
</comment>
<comment type="subunit">
    <text evidence="1 4">eIF4F is a multi-subunit complex, the composition of which varies with external and internal environmental conditions. It is composed of at least EIF4A, EIF4E and EIF4G (By similarity). Interacts with DRM2 (via UBA domains) (PubMed:23732981).</text>
</comment>
<comment type="subcellular location">
    <subcellularLocation>
        <location evidence="1">Cytoplasm</location>
    </subcellularLocation>
    <subcellularLocation>
        <location evidence="4">Nucleus</location>
    </subcellularLocation>
    <text evidence="4">Localizes to the nucleus when interacting with DRM2.</text>
</comment>
<comment type="domain">
    <text>The Q motif is unique to and characteristic of the DEAD box family of RNA helicases and controls ATP binding and hydrolysis.</text>
</comment>
<comment type="similarity">
    <text evidence="5">Belongs to the DEAD box helicase family. eIF4A subfamily.</text>
</comment>
<comment type="sequence caution" evidence="5">
    <conflict type="frameshift">
        <sequence resource="EMBL-CDS" id="BAB21258"/>
    </conflict>
</comment>
<comment type="sequence caution" evidence="5">
    <conflict type="frameshift">
        <sequence resource="EMBL-CDS" id="BAB21259"/>
    </conflict>
</comment>
<reference key="1">
    <citation type="journal article" date="2001" name="DNA Seq.">
        <title>Identification and characterization of two genes encoding the eukaryotic initiation factor 4A in rice.</title>
        <authorList>
            <person name="Kato A."/>
            <person name="Fujita S."/>
            <person name="Komeda Y."/>
        </authorList>
    </citation>
    <scope>NUCLEOTIDE SEQUENCE [GENOMIC DNA / MRNA]</scope>
</reference>
<reference key="2">
    <citation type="submission" date="2012-11" db="EMBL/GenBank/DDBJ databases">
        <title>Structural and expression analysis of immature seed genes in Oryza sativa L.</title>
        <authorList>
            <person name="Yoon U.H."/>
        </authorList>
    </citation>
    <scope>NUCLEOTIDE SEQUENCE [MRNA]</scope>
    <source>
        <strain>cv. Ilpoombyeo</strain>
        <tissue>Immature seed</tissue>
    </source>
</reference>
<reference key="3">
    <citation type="journal article" date="2005" name="Nature">
        <title>The map-based sequence of the rice genome.</title>
        <authorList>
            <consortium name="International rice genome sequencing project (IRGSP)"/>
        </authorList>
    </citation>
    <scope>NUCLEOTIDE SEQUENCE [LARGE SCALE GENOMIC DNA]</scope>
    <source>
        <strain>cv. Nipponbare</strain>
    </source>
</reference>
<reference key="4">
    <citation type="journal article" date="2008" name="Nucleic Acids Res.">
        <title>The rice annotation project database (RAP-DB): 2008 update.</title>
        <authorList>
            <consortium name="The rice annotation project (RAP)"/>
        </authorList>
    </citation>
    <scope>GENOME REANNOTATION</scope>
    <source>
        <strain>cv. Nipponbare</strain>
    </source>
</reference>
<reference key="5">
    <citation type="journal article" date="2013" name="Rice">
        <title>Improvement of the Oryza sativa Nipponbare reference genome using next generation sequence and optical map data.</title>
        <authorList>
            <person name="Kawahara Y."/>
            <person name="de la Bastide M."/>
            <person name="Hamilton J.P."/>
            <person name="Kanamori H."/>
            <person name="McCombie W.R."/>
            <person name="Ouyang S."/>
            <person name="Schwartz D.C."/>
            <person name="Tanaka T."/>
            <person name="Wu J."/>
            <person name="Zhou S."/>
            <person name="Childs K.L."/>
            <person name="Davidson R.M."/>
            <person name="Lin H."/>
            <person name="Quesada-Ocampo L."/>
            <person name="Vaillancourt B."/>
            <person name="Sakai H."/>
            <person name="Lee S.S."/>
            <person name="Kim J."/>
            <person name="Numa H."/>
            <person name="Itoh T."/>
            <person name="Buell C.R."/>
            <person name="Matsumoto T."/>
        </authorList>
    </citation>
    <scope>GENOME REANNOTATION</scope>
    <source>
        <strain>cv. Nipponbare</strain>
    </source>
</reference>
<reference key="6">
    <citation type="journal article" date="2005" name="PLoS Biol.">
        <title>The genomes of Oryza sativa: a history of duplications.</title>
        <authorList>
            <person name="Yu J."/>
            <person name="Wang J."/>
            <person name="Lin W."/>
            <person name="Li S."/>
            <person name="Li H."/>
            <person name="Zhou J."/>
            <person name="Ni P."/>
            <person name="Dong W."/>
            <person name="Hu S."/>
            <person name="Zeng C."/>
            <person name="Zhang J."/>
            <person name="Zhang Y."/>
            <person name="Li R."/>
            <person name="Xu Z."/>
            <person name="Li S."/>
            <person name="Li X."/>
            <person name="Zheng H."/>
            <person name="Cong L."/>
            <person name="Lin L."/>
            <person name="Yin J."/>
            <person name="Geng J."/>
            <person name="Li G."/>
            <person name="Shi J."/>
            <person name="Liu J."/>
            <person name="Lv H."/>
            <person name="Li J."/>
            <person name="Wang J."/>
            <person name="Deng Y."/>
            <person name="Ran L."/>
            <person name="Shi X."/>
            <person name="Wang X."/>
            <person name="Wu Q."/>
            <person name="Li C."/>
            <person name="Ren X."/>
            <person name="Wang J."/>
            <person name="Wang X."/>
            <person name="Li D."/>
            <person name="Liu D."/>
            <person name="Zhang X."/>
            <person name="Ji Z."/>
            <person name="Zhao W."/>
            <person name="Sun Y."/>
            <person name="Zhang Z."/>
            <person name="Bao J."/>
            <person name="Han Y."/>
            <person name="Dong L."/>
            <person name="Ji J."/>
            <person name="Chen P."/>
            <person name="Wu S."/>
            <person name="Liu J."/>
            <person name="Xiao Y."/>
            <person name="Bu D."/>
            <person name="Tan J."/>
            <person name="Yang L."/>
            <person name="Ye C."/>
            <person name="Zhang J."/>
            <person name="Xu J."/>
            <person name="Zhou Y."/>
            <person name="Yu Y."/>
            <person name="Zhang B."/>
            <person name="Zhuang S."/>
            <person name="Wei H."/>
            <person name="Liu B."/>
            <person name="Lei M."/>
            <person name="Yu H."/>
            <person name="Li Y."/>
            <person name="Xu H."/>
            <person name="Wei S."/>
            <person name="He X."/>
            <person name="Fang L."/>
            <person name="Zhang Z."/>
            <person name="Zhang Y."/>
            <person name="Huang X."/>
            <person name="Su Z."/>
            <person name="Tong W."/>
            <person name="Li J."/>
            <person name="Tong Z."/>
            <person name="Li S."/>
            <person name="Ye J."/>
            <person name="Wang L."/>
            <person name="Fang L."/>
            <person name="Lei T."/>
            <person name="Chen C.-S."/>
            <person name="Chen H.-C."/>
            <person name="Xu Z."/>
            <person name="Li H."/>
            <person name="Huang H."/>
            <person name="Zhang F."/>
            <person name="Xu H."/>
            <person name="Li N."/>
            <person name="Zhao C."/>
            <person name="Li S."/>
            <person name="Dong L."/>
            <person name="Huang Y."/>
            <person name="Li L."/>
            <person name="Xi Y."/>
            <person name="Qi Q."/>
            <person name="Li W."/>
            <person name="Zhang B."/>
            <person name="Hu W."/>
            <person name="Zhang Y."/>
            <person name="Tian X."/>
            <person name="Jiao Y."/>
            <person name="Liang X."/>
            <person name="Jin J."/>
            <person name="Gao L."/>
            <person name="Zheng W."/>
            <person name="Hao B."/>
            <person name="Liu S.-M."/>
            <person name="Wang W."/>
            <person name="Yuan L."/>
            <person name="Cao M."/>
            <person name="McDermott J."/>
            <person name="Samudrala R."/>
            <person name="Wang J."/>
            <person name="Wong G.K.-S."/>
            <person name="Yang H."/>
        </authorList>
    </citation>
    <scope>NUCLEOTIDE SEQUENCE [LARGE SCALE GENOMIC DNA]</scope>
    <source>
        <strain>cv. Nipponbare</strain>
    </source>
</reference>
<reference key="7">
    <citation type="journal article" date="2003" name="Science">
        <title>Collection, mapping, and annotation of over 28,000 cDNA clones from japonica rice.</title>
        <authorList>
            <consortium name="The rice full-length cDNA consortium"/>
        </authorList>
    </citation>
    <scope>NUCLEOTIDE SEQUENCE [LARGE SCALE MRNA]</scope>
    <source>
        <strain>cv. Nipponbare</strain>
    </source>
</reference>
<reference key="8">
    <citation type="journal article" date="2013" name="J. Mol. Biol.">
        <title>De novo methyltransferase, OsDRM2, interacts with the ATP-dependent RNA helicase, OseIF4A, in rice.</title>
        <authorList>
            <person name="Dangwal M."/>
            <person name="Malik G."/>
            <person name="Kapoor S."/>
            <person name="Kapoor M."/>
        </authorList>
    </citation>
    <scope>INTERACTION WITH DRM2</scope>
    <scope>SUBCELLULAR LOCATION</scope>
</reference>
<dbReference type="EC" id="3.6.4.13"/>
<dbReference type="EMBL" id="AB046414">
    <property type="protein sequence ID" value="BAB21258.1"/>
    <property type="status" value="ALT_FRAME"/>
    <property type="molecule type" value="mRNA"/>
</dbReference>
<dbReference type="EMBL" id="AB046415">
    <property type="protein sequence ID" value="BAB21259.1"/>
    <property type="status" value="ALT_FRAME"/>
    <property type="molecule type" value="Genomic_DNA"/>
</dbReference>
<dbReference type="EMBL" id="KC140119">
    <property type="protein sequence ID" value="AGT42311.1"/>
    <property type="molecule type" value="mRNA"/>
</dbReference>
<dbReference type="EMBL" id="AP005288">
    <property type="protein sequence ID" value="BAD13081.1"/>
    <property type="molecule type" value="Genomic_DNA"/>
</dbReference>
<dbReference type="EMBL" id="AP008208">
    <property type="protein sequence ID" value="BAF07792.1"/>
    <property type="molecule type" value="Genomic_DNA"/>
</dbReference>
<dbReference type="EMBL" id="AP014958">
    <property type="protein sequence ID" value="BAS76965.1"/>
    <property type="molecule type" value="Genomic_DNA"/>
</dbReference>
<dbReference type="EMBL" id="CM000139">
    <property type="protein sequence ID" value="EEE56296.1"/>
    <property type="molecule type" value="Genomic_DNA"/>
</dbReference>
<dbReference type="EMBL" id="AK073620">
    <property type="protein sequence ID" value="BAG93556.1"/>
    <property type="molecule type" value="mRNA"/>
</dbReference>
<dbReference type="RefSeq" id="XP_015626460.1">
    <property type="nucleotide sequence ID" value="XM_015770974.1"/>
</dbReference>
<dbReference type="SMR" id="Q6Z2Z4"/>
<dbReference type="FunCoup" id="Q6Z2Z4">
    <property type="interactions" value="2867"/>
</dbReference>
<dbReference type="STRING" id="39947.Q6Z2Z4"/>
<dbReference type="PaxDb" id="39947-Q6Z2Z4"/>
<dbReference type="EnsemblPlants" id="Os02t0146600-01">
    <property type="protein sequence ID" value="Os02t0146600-01"/>
    <property type="gene ID" value="Os02g0146600"/>
</dbReference>
<dbReference type="Gramene" id="Os02t0146600-01">
    <property type="protein sequence ID" value="Os02t0146600-01"/>
    <property type="gene ID" value="Os02g0146600"/>
</dbReference>
<dbReference type="KEGG" id="dosa:Os02g0146600"/>
<dbReference type="eggNOG" id="KOG0327">
    <property type="taxonomic scope" value="Eukaryota"/>
</dbReference>
<dbReference type="HOGENOM" id="CLU_003041_1_0_1"/>
<dbReference type="InParanoid" id="Q6Z2Z4"/>
<dbReference type="OMA" id="FTHRNGR"/>
<dbReference type="OrthoDB" id="723973at2759"/>
<dbReference type="Proteomes" id="UP000000763">
    <property type="component" value="Chromosome 2"/>
</dbReference>
<dbReference type="Proteomes" id="UP000007752">
    <property type="component" value="Chromosome 2"/>
</dbReference>
<dbReference type="Proteomes" id="UP000059680">
    <property type="component" value="Chromosome 2"/>
</dbReference>
<dbReference type="GO" id="GO:0005737">
    <property type="term" value="C:cytoplasm"/>
    <property type="evidence" value="ECO:0000314"/>
    <property type="project" value="UniProtKB"/>
</dbReference>
<dbReference type="GO" id="GO:0010494">
    <property type="term" value="C:cytoplasmic stress granule"/>
    <property type="evidence" value="ECO:0000318"/>
    <property type="project" value="GO_Central"/>
</dbReference>
<dbReference type="GO" id="GO:0005634">
    <property type="term" value="C:nucleus"/>
    <property type="evidence" value="ECO:0000314"/>
    <property type="project" value="UniProtKB"/>
</dbReference>
<dbReference type="GO" id="GO:0005524">
    <property type="term" value="F:ATP binding"/>
    <property type="evidence" value="ECO:0007669"/>
    <property type="project" value="UniProtKB-KW"/>
</dbReference>
<dbReference type="GO" id="GO:0016887">
    <property type="term" value="F:ATP hydrolysis activity"/>
    <property type="evidence" value="ECO:0007669"/>
    <property type="project" value="RHEA"/>
</dbReference>
<dbReference type="GO" id="GO:0003723">
    <property type="term" value="F:RNA binding"/>
    <property type="evidence" value="ECO:0007669"/>
    <property type="project" value="UniProtKB-KW"/>
</dbReference>
<dbReference type="GO" id="GO:0003724">
    <property type="term" value="F:RNA helicase activity"/>
    <property type="evidence" value="ECO:0007669"/>
    <property type="project" value="UniProtKB-EC"/>
</dbReference>
<dbReference type="GO" id="GO:0003743">
    <property type="term" value="F:translation initiation factor activity"/>
    <property type="evidence" value="ECO:0000318"/>
    <property type="project" value="GO_Central"/>
</dbReference>
<dbReference type="GO" id="GO:0002183">
    <property type="term" value="P:cytoplasmic translational initiation"/>
    <property type="evidence" value="ECO:0000318"/>
    <property type="project" value="GO_Central"/>
</dbReference>
<dbReference type="CDD" id="cd17939">
    <property type="entry name" value="DEADc_EIF4A"/>
    <property type="match status" value="1"/>
</dbReference>
<dbReference type="CDD" id="cd18787">
    <property type="entry name" value="SF2_C_DEAD"/>
    <property type="match status" value="1"/>
</dbReference>
<dbReference type="FunFam" id="3.40.50.300:FF:000089">
    <property type="entry name" value="Eukaryotic initiation factor 4A-II"/>
    <property type="match status" value="1"/>
</dbReference>
<dbReference type="FunFam" id="3.40.50.300:FF:000031">
    <property type="entry name" value="Eukaryotic initiation factor 4A-III"/>
    <property type="match status" value="1"/>
</dbReference>
<dbReference type="Gene3D" id="3.40.50.300">
    <property type="entry name" value="P-loop containing nucleotide triphosphate hydrolases"/>
    <property type="match status" value="2"/>
</dbReference>
<dbReference type="InterPro" id="IPR011545">
    <property type="entry name" value="DEAD/DEAH_box_helicase_dom"/>
</dbReference>
<dbReference type="InterPro" id="IPR014001">
    <property type="entry name" value="Helicase_ATP-bd"/>
</dbReference>
<dbReference type="InterPro" id="IPR001650">
    <property type="entry name" value="Helicase_C-like"/>
</dbReference>
<dbReference type="InterPro" id="IPR027417">
    <property type="entry name" value="P-loop_NTPase"/>
</dbReference>
<dbReference type="InterPro" id="IPR000629">
    <property type="entry name" value="RNA-helicase_DEAD-box_CS"/>
</dbReference>
<dbReference type="InterPro" id="IPR014014">
    <property type="entry name" value="RNA_helicase_DEAD_Q_motif"/>
</dbReference>
<dbReference type="PANTHER" id="PTHR47958">
    <property type="entry name" value="ATP-DEPENDENT RNA HELICASE DBP3"/>
    <property type="match status" value="1"/>
</dbReference>
<dbReference type="Pfam" id="PF00270">
    <property type="entry name" value="DEAD"/>
    <property type="match status" value="1"/>
</dbReference>
<dbReference type="Pfam" id="PF00271">
    <property type="entry name" value="Helicase_C"/>
    <property type="match status" value="1"/>
</dbReference>
<dbReference type="SMART" id="SM00487">
    <property type="entry name" value="DEXDc"/>
    <property type="match status" value="1"/>
</dbReference>
<dbReference type="SMART" id="SM00490">
    <property type="entry name" value="HELICc"/>
    <property type="match status" value="1"/>
</dbReference>
<dbReference type="SUPFAM" id="SSF52540">
    <property type="entry name" value="P-loop containing nucleoside triphosphate hydrolases"/>
    <property type="match status" value="1"/>
</dbReference>
<dbReference type="PROSITE" id="PS00039">
    <property type="entry name" value="DEAD_ATP_HELICASE"/>
    <property type="match status" value="1"/>
</dbReference>
<dbReference type="PROSITE" id="PS51192">
    <property type="entry name" value="HELICASE_ATP_BIND_1"/>
    <property type="match status" value="1"/>
</dbReference>
<dbReference type="PROSITE" id="PS51194">
    <property type="entry name" value="HELICASE_CTER"/>
    <property type="match status" value="1"/>
</dbReference>
<dbReference type="PROSITE" id="PS51195">
    <property type="entry name" value="Q_MOTIF"/>
    <property type="match status" value="1"/>
</dbReference>
<keyword id="KW-0067">ATP-binding</keyword>
<keyword id="KW-0963">Cytoplasm</keyword>
<keyword id="KW-0347">Helicase</keyword>
<keyword id="KW-0378">Hydrolase</keyword>
<keyword id="KW-0396">Initiation factor</keyword>
<keyword id="KW-0547">Nucleotide-binding</keyword>
<keyword id="KW-0539">Nucleus</keyword>
<keyword id="KW-0648">Protein biosynthesis</keyword>
<keyword id="KW-1185">Reference proteome</keyword>
<keyword id="KW-0694">RNA-binding</keyword>
<evidence type="ECO:0000250" key="1"/>
<evidence type="ECO:0000255" key="2">
    <source>
        <dbReference type="PROSITE-ProRule" id="PRU00541"/>
    </source>
</evidence>
<evidence type="ECO:0000255" key="3">
    <source>
        <dbReference type="PROSITE-ProRule" id="PRU00542"/>
    </source>
</evidence>
<evidence type="ECO:0000269" key="4">
    <source>
    </source>
</evidence>
<evidence type="ECO:0000305" key="5"/>
<evidence type="ECO:0000312" key="6">
    <source>
        <dbReference type="EMBL" id="EEE56296.1"/>
    </source>
</evidence>
<sequence>MAGMAPEGSQFDAKHYDSKMQELLHQGDNEEFFTSYDEVFESFDDMGLQENLLRGIYAYGFEKPSAIQQRGIVPFCKGLDVIQQAQSGTGKTATFCSGILQQLDYGLVECQSLVLAPTRELAQQIEKVMRALGDYLGVKVHACVGGTSVREDQRILASGVHVVVGTPGRVFDMLRRQSLRPDHIKMFVLDEADEMLSRGFKDQIYDIFQLLPPKIQVGVFSATMPPEALEITRKFMNKPVRILVKRDELTLEGIKQFYVNVEKEDWKLDTLCDLYETLAITQSVIFVNTRRKVDWLTDKMRSRDHTVSATHGDMDQNTRDIIMREFRSGSSRVLITTDLLARGIDVQQVSLVINYDLPTQPENYLHRIGRSGRFGRKGVAINFVTRDDERMLFDIQRFYNVTIEELPANVADLL</sequence>
<protein>
    <recommendedName>
        <fullName>Eukaryotic initiation factor 4A-3</fullName>
        <shortName>eIF-4A-3</shortName>
        <ecNumber>3.6.4.13</ecNumber>
    </recommendedName>
    <alternativeName>
        <fullName>ATP-dependent RNA helicase eIF4A-3</fullName>
    </alternativeName>
    <alternativeName>
        <fullName>DEAD-box ATP-dependent RNA helicase 23</fullName>
    </alternativeName>
    <alternativeName>
        <fullName>eIF4A-2</fullName>
    </alternativeName>
</protein>
<feature type="chain" id="PRO_0000282441" description="Eukaryotic initiation factor 4A-3">
    <location>
        <begin position="1"/>
        <end position="414"/>
    </location>
</feature>
<feature type="domain" description="Helicase ATP-binding" evidence="2">
    <location>
        <begin position="72"/>
        <end position="242"/>
    </location>
</feature>
<feature type="domain" description="Helicase C-terminal" evidence="3">
    <location>
        <begin position="253"/>
        <end position="414"/>
    </location>
</feature>
<feature type="short sequence motif" description="Q motif">
    <location>
        <begin position="41"/>
        <end position="69"/>
    </location>
</feature>
<feature type="short sequence motif" description="DEAD box">
    <location>
        <begin position="190"/>
        <end position="193"/>
    </location>
</feature>
<feature type="binding site" evidence="2">
    <location>
        <begin position="85"/>
        <end position="92"/>
    </location>
    <ligand>
        <name>ATP</name>
        <dbReference type="ChEBI" id="CHEBI:30616"/>
    </ligand>
</feature>
<feature type="sequence conflict" description="In Ref. 1; BAB21258/BAB21259." evidence="5" ref="1">
    <original>EV</original>
    <variation>DL</variation>
    <location>
        <begin position="38"/>
        <end position="39"/>
    </location>
</feature>
<feature type="sequence conflict" description="In Ref. 1; BAB21258/BAB21259." evidence="5" ref="1">
    <original>Q</original>
    <variation>K</variation>
    <location>
        <position position="69"/>
    </location>
</feature>
<feature type="sequence conflict" description="In Ref. 1; BAB21258/BAB21259." evidence="5" ref="1">
    <original>D</original>
    <variation>Q</variation>
    <location>
        <position position="152"/>
    </location>
</feature>
<feature type="sequence conflict" description="In Ref. 1; BAB21258/BAB21259." evidence="5" ref="1">
    <original>A</original>
    <variation>G</variation>
    <location>
        <position position="228"/>
    </location>
</feature>
<feature type="sequence conflict" description="In Ref. 1; BAB21258/BAB21259." evidence="5" ref="1">
    <original>RK</original>
    <variation>LR</variation>
    <location>
        <begin position="233"/>
        <end position="234"/>
    </location>
</feature>
<feature type="sequence conflict" description="In Ref. 1; BAB21258/BAB21259." evidence="5" ref="1">
    <original>N</original>
    <variation>D</variation>
    <location>
        <position position="237"/>
    </location>
</feature>
<feature type="sequence conflict" description="In Ref. 1; BAB21258/BAB21259." evidence="5" ref="1">
    <original>L</original>
    <variation>R</variation>
    <location>
        <position position="251"/>
    </location>
</feature>
<feature type="sequence conflict" description="In Ref. 1; BAB21258/BAB21259." evidence="5" ref="1">
    <original>ET</original>
    <variation>DS</variation>
    <location>
        <begin position="276"/>
        <end position="277"/>
    </location>
</feature>
<feature type="sequence conflict" description="In Ref. 1; BAB21258/BAB21259." evidence="5" ref="1">
    <original>RRK</original>
    <variation>LRM</variation>
    <location>
        <begin position="290"/>
        <end position="292"/>
    </location>
</feature>
<feature type="sequence conflict" description="In Ref. 1; BAB21258/BAB21259." evidence="5" ref="1">
    <original>N</original>
    <variation>I</variation>
    <location>
        <position position="317"/>
    </location>
</feature>
<feature type="sequence conflict" description="In Ref. 1; BAB21258/BAB21259." evidence="5" ref="1">
    <original>A</original>
    <variation>D</variation>
    <location>
        <position position="341"/>
    </location>
</feature>
<feature type="sequence conflict" description="In Ref. 1; BAB21258/BAB21259." evidence="5" ref="1">
    <original>P</original>
    <variation>S</variation>
    <location>
        <position position="358"/>
    </location>
</feature>
<feature type="sequence conflict" description="In Ref. 1; BAB21258/BAB21259." evidence="5" ref="1">
    <original>P</original>
    <variation>T</variation>
    <location>
        <position position="361"/>
    </location>
</feature>
<feature type="sequence conflict" description="In Ref. 1; BAB21258/BAB21259." evidence="5" ref="1">
    <original>N</original>
    <variation>I</variation>
    <location>
        <position position="382"/>
    </location>
</feature>
<feature type="sequence conflict" description="In Ref. 1; BAB21258/BAB21259." evidence="5" ref="1">
    <original>V</original>
    <variation>G</variation>
    <location>
        <position position="401"/>
    </location>
</feature>
<organism>
    <name type="scientific">Oryza sativa subsp. japonica</name>
    <name type="common">Rice</name>
    <dbReference type="NCBI Taxonomy" id="39947"/>
    <lineage>
        <taxon>Eukaryota</taxon>
        <taxon>Viridiplantae</taxon>
        <taxon>Streptophyta</taxon>
        <taxon>Embryophyta</taxon>
        <taxon>Tracheophyta</taxon>
        <taxon>Spermatophyta</taxon>
        <taxon>Magnoliopsida</taxon>
        <taxon>Liliopsida</taxon>
        <taxon>Poales</taxon>
        <taxon>Poaceae</taxon>
        <taxon>BOP clade</taxon>
        <taxon>Oryzoideae</taxon>
        <taxon>Oryzeae</taxon>
        <taxon>Oryzinae</taxon>
        <taxon>Oryza</taxon>
        <taxon>Oryza sativa</taxon>
    </lineage>
</organism>